<comment type="function">
    <text evidence="1">Catalyzes the reversible phosphorylation of UMP to UDP.</text>
</comment>
<comment type="catalytic activity">
    <reaction evidence="1">
        <text>UMP + ATP = UDP + ADP</text>
        <dbReference type="Rhea" id="RHEA:24400"/>
        <dbReference type="ChEBI" id="CHEBI:30616"/>
        <dbReference type="ChEBI" id="CHEBI:57865"/>
        <dbReference type="ChEBI" id="CHEBI:58223"/>
        <dbReference type="ChEBI" id="CHEBI:456216"/>
        <dbReference type="EC" id="2.7.4.22"/>
    </reaction>
</comment>
<comment type="activity regulation">
    <text evidence="1">Inhibited by UTP.</text>
</comment>
<comment type="pathway">
    <text evidence="1">Pyrimidine metabolism; CTP biosynthesis via de novo pathway; UDP from UMP (UMPK route): step 1/1.</text>
</comment>
<comment type="subunit">
    <text evidence="1">Homohexamer.</text>
</comment>
<comment type="subcellular location">
    <subcellularLocation>
        <location evidence="1">Cytoplasm</location>
    </subcellularLocation>
</comment>
<comment type="similarity">
    <text evidence="1">Belongs to the UMP kinase family.</text>
</comment>
<feature type="chain" id="PRO_0000323874" description="Uridylate kinase">
    <location>
        <begin position="1"/>
        <end position="237"/>
    </location>
</feature>
<feature type="binding site" evidence="1">
    <location>
        <begin position="13"/>
        <end position="16"/>
    </location>
    <ligand>
        <name>ATP</name>
        <dbReference type="ChEBI" id="CHEBI:30616"/>
    </ligand>
</feature>
<feature type="binding site" evidence="1">
    <location>
        <position position="53"/>
    </location>
    <ligand>
        <name>UMP</name>
        <dbReference type="ChEBI" id="CHEBI:57865"/>
    </ligand>
</feature>
<feature type="binding site" evidence="1">
    <location>
        <position position="54"/>
    </location>
    <ligand>
        <name>ATP</name>
        <dbReference type="ChEBI" id="CHEBI:30616"/>
    </ligand>
</feature>
<feature type="binding site" evidence="1">
    <location>
        <position position="58"/>
    </location>
    <ligand>
        <name>ATP</name>
        <dbReference type="ChEBI" id="CHEBI:30616"/>
    </ligand>
</feature>
<feature type="binding site" evidence="1">
    <location>
        <position position="73"/>
    </location>
    <ligand>
        <name>UMP</name>
        <dbReference type="ChEBI" id="CHEBI:57865"/>
    </ligand>
</feature>
<feature type="binding site" evidence="1">
    <location>
        <begin position="134"/>
        <end position="141"/>
    </location>
    <ligand>
        <name>UMP</name>
        <dbReference type="ChEBI" id="CHEBI:57865"/>
    </ligand>
</feature>
<feature type="binding site" evidence="1">
    <location>
        <position position="162"/>
    </location>
    <ligand>
        <name>ATP</name>
        <dbReference type="ChEBI" id="CHEBI:30616"/>
    </ligand>
</feature>
<feature type="binding site" evidence="1">
    <location>
        <position position="168"/>
    </location>
    <ligand>
        <name>ATP</name>
        <dbReference type="ChEBI" id="CHEBI:30616"/>
    </ligand>
</feature>
<feature type="binding site" evidence="1">
    <location>
        <position position="171"/>
    </location>
    <ligand>
        <name>ATP</name>
        <dbReference type="ChEBI" id="CHEBI:30616"/>
    </ligand>
</feature>
<name>PYRH_LEIXX</name>
<proteinExistence type="inferred from homology"/>
<dbReference type="EC" id="2.7.4.22" evidence="1"/>
<dbReference type="EMBL" id="AE016822">
    <property type="protein sequence ID" value="AAT89090.1"/>
    <property type="molecule type" value="Genomic_DNA"/>
</dbReference>
<dbReference type="RefSeq" id="WP_011186085.1">
    <property type="nucleotide sequence ID" value="NC_006087.1"/>
</dbReference>
<dbReference type="SMR" id="Q6AEV5"/>
<dbReference type="STRING" id="281090.Lxx12460"/>
<dbReference type="KEGG" id="lxx:Lxx12460"/>
<dbReference type="eggNOG" id="COG0528">
    <property type="taxonomic scope" value="Bacteria"/>
</dbReference>
<dbReference type="HOGENOM" id="CLU_033861_0_0_11"/>
<dbReference type="UniPathway" id="UPA00159">
    <property type="reaction ID" value="UER00275"/>
</dbReference>
<dbReference type="Proteomes" id="UP000001306">
    <property type="component" value="Chromosome"/>
</dbReference>
<dbReference type="GO" id="GO:0005737">
    <property type="term" value="C:cytoplasm"/>
    <property type="evidence" value="ECO:0007669"/>
    <property type="project" value="UniProtKB-SubCell"/>
</dbReference>
<dbReference type="GO" id="GO:0005524">
    <property type="term" value="F:ATP binding"/>
    <property type="evidence" value="ECO:0007669"/>
    <property type="project" value="UniProtKB-KW"/>
</dbReference>
<dbReference type="GO" id="GO:0033862">
    <property type="term" value="F:UMP kinase activity"/>
    <property type="evidence" value="ECO:0007669"/>
    <property type="project" value="UniProtKB-EC"/>
</dbReference>
<dbReference type="GO" id="GO:0044210">
    <property type="term" value="P:'de novo' CTP biosynthetic process"/>
    <property type="evidence" value="ECO:0007669"/>
    <property type="project" value="UniProtKB-UniRule"/>
</dbReference>
<dbReference type="GO" id="GO:0006225">
    <property type="term" value="P:UDP biosynthetic process"/>
    <property type="evidence" value="ECO:0007669"/>
    <property type="project" value="TreeGrafter"/>
</dbReference>
<dbReference type="CDD" id="cd04254">
    <property type="entry name" value="AAK_UMPK-PyrH-Ec"/>
    <property type="match status" value="1"/>
</dbReference>
<dbReference type="FunFam" id="3.40.1160.10:FF:000001">
    <property type="entry name" value="Uridylate kinase"/>
    <property type="match status" value="1"/>
</dbReference>
<dbReference type="Gene3D" id="3.40.1160.10">
    <property type="entry name" value="Acetylglutamate kinase-like"/>
    <property type="match status" value="1"/>
</dbReference>
<dbReference type="HAMAP" id="MF_01220_B">
    <property type="entry name" value="PyrH_B"/>
    <property type="match status" value="1"/>
</dbReference>
<dbReference type="InterPro" id="IPR036393">
    <property type="entry name" value="AceGlu_kinase-like_sf"/>
</dbReference>
<dbReference type="InterPro" id="IPR001048">
    <property type="entry name" value="Asp/Glu/Uridylate_kinase"/>
</dbReference>
<dbReference type="InterPro" id="IPR011817">
    <property type="entry name" value="Uridylate_kinase"/>
</dbReference>
<dbReference type="InterPro" id="IPR015963">
    <property type="entry name" value="Uridylate_kinase_bac"/>
</dbReference>
<dbReference type="NCBIfam" id="TIGR02075">
    <property type="entry name" value="pyrH_bact"/>
    <property type="match status" value="1"/>
</dbReference>
<dbReference type="PANTHER" id="PTHR42833">
    <property type="entry name" value="URIDYLATE KINASE"/>
    <property type="match status" value="1"/>
</dbReference>
<dbReference type="PANTHER" id="PTHR42833:SF4">
    <property type="entry name" value="URIDYLATE KINASE PUMPKIN, CHLOROPLASTIC"/>
    <property type="match status" value="1"/>
</dbReference>
<dbReference type="Pfam" id="PF00696">
    <property type="entry name" value="AA_kinase"/>
    <property type="match status" value="1"/>
</dbReference>
<dbReference type="PIRSF" id="PIRSF005650">
    <property type="entry name" value="Uridylate_kin"/>
    <property type="match status" value="1"/>
</dbReference>
<dbReference type="SUPFAM" id="SSF53633">
    <property type="entry name" value="Carbamate kinase-like"/>
    <property type="match status" value="1"/>
</dbReference>
<evidence type="ECO:0000255" key="1">
    <source>
        <dbReference type="HAMAP-Rule" id="MF_01220"/>
    </source>
</evidence>
<keyword id="KW-0067">ATP-binding</keyword>
<keyword id="KW-0963">Cytoplasm</keyword>
<keyword id="KW-0418">Kinase</keyword>
<keyword id="KW-0547">Nucleotide-binding</keyword>
<keyword id="KW-0665">Pyrimidine biosynthesis</keyword>
<keyword id="KW-1185">Reference proteome</keyword>
<keyword id="KW-0808">Transferase</keyword>
<accession>Q6AEV5</accession>
<reference key="1">
    <citation type="journal article" date="2004" name="Mol. Plant Microbe Interact.">
        <title>The genome sequence of the Gram-positive sugarcane pathogen Leifsonia xyli subsp. xyli.</title>
        <authorList>
            <person name="Monteiro-Vitorello C.B."/>
            <person name="Camargo L.E.A."/>
            <person name="Van Sluys M.A."/>
            <person name="Kitajima J.P."/>
            <person name="Truffi D."/>
            <person name="do Amaral A.M."/>
            <person name="Harakava R."/>
            <person name="de Oliveira J.C.F."/>
            <person name="Wood D."/>
            <person name="de Oliveira M.C."/>
            <person name="Miyaki C.Y."/>
            <person name="Takita M.A."/>
            <person name="da Silva A.C.R."/>
            <person name="Furlan L.R."/>
            <person name="Carraro D.M."/>
            <person name="Camarotte G."/>
            <person name="Almeida N.F. Jr."/>
            <person name="Carrer H."/>
            <person name="Coutinho L.L."/>
            <person name="El-Dorry H.A."/>
            <person name="Ferro M.I.T."/>
            <person name="Gagliardi P.R."/>
            <person name="Giglioti E."/>
            <person name="Goldman M.H.S."/>
            <person name="Goldman G.H."/>
            <person name="Kimura E.T."/>
            <person name="Ferro E.S."/>
            <person name="Kuramae E.E."/>
            <person name="Lemos E.G.M."/>
            <person name="Lemos M.V.F."/>
            <person name="Mauro S.M.Z."/>
            <person name="Machado M.A."/>
            <person name="Marino C.L."/>
            <person name="Menck C.F."/>
            <person name="Nunes L.R."/>
            <person name="Oliveira R.C."/>
            <person name="Pereira G.G."/>
            <person name="Siqueira W."/>
            <person name="de Souza A.A."/>
            <person name="Tsai S.M."/>
            <person name="Zanca A.S."/>
            <person name="Simpson A.J.G."/>
            <person name="Brumbley S.M."/>
            <person name="Setubal J.C."/>
        </authorList>
    </citation>
    <scope>NUCLEOTIDE SEQUENCE [LARGE SCALE GENOMIC DNA]</scope>
    <source>
        <strain>CTCB07</strain>
    </source>
</reference>
<sequence>MTMADKRRRVLLKLSGEAFGGGQLGVNPDIVSGIAREIAQAATDVEIAIVVGGGNFFRGAELSQRGMDRGRADYMGMLGTVMNSLALQDFLEQAGAETRVQSAIEMIQVAEPYIPLRAERHLEKGRIVIFGAGAGLPYFSTDTVAAQRALEIIADVVLVAKNGVDGMYDDDPRTNPDARKIDQISHQEALKQNLKAVDSTALSLCMDNGMPMRIFGMEPAGNVTAALLGAEIGTLLG</sequence>
<protein>
    <recommendedName>
        <fullName evidence="1">Uridylate kinase</fullName>
        <shortName evidence="1">UK</shortName>
        <ecNumber evidence="1">2.7.4.22</ecNumber>
    </recommendedName>
    <alternativeName>
        <fullName evidence="1">Uridine monophosphate kinase</fullName>
        <shortName evidence="1">UMP kinase</shortName>
        <shortName evidence="1">UMPK</shortName>
    </alternativeName>
</protein>
<gene>
    <name evidence="1" type="primary">pyrH</name>
    <name type="ordered locus">Lxx12460</name>
</gene>
<organism>
    <name type="scientific">Leifsonia xyli subsp. xyli (strain CTCB07)</name>
    <dbReference type="NCBI Taxonomy" id="281090"/>
    <lineage>
        <taxon>Bacteria</taxon>
        <taxon>Bacillati</taxon>
        <taxon>Actinomycetota</taxon>
        <taxon>Actinomycetes</taxon>
        <taxon>Micrococcales</taxon>
        <taxon>Microbacteriaceae</taxon>
        <taxon>Leifsonia</taxon>
    </lineage>
</organism>